<proteinExistence type="evidence at protein level"/>
<protein>
    <recommendedName>
        <fullName evidence="10">Synaptojanin</fullName>
        <ecNumber evidence="1">3.1.3.36</ecNumber>
    </recommendedName>
    <alternativeName>
        <fullName evidence="1">Synaptic inositol 1,4,5-trisphosphate 5-phosphatase</fullName>
    </alternativeName>
    <alternativeName>
        <fullName evidence="15">Uncoordinated protein 26</fullName>
    </alternativeName>
</protein>
<name>SYNJ_CAEEL</name>
<reference evidence="12" key="1">
    <citation type="journal article" date="2000" name="J. Cell Biol.">
        <title>Mutations in synaptojanin disrupt synaptic vesicle recycling.</title>
        <authorList>
            <person name="Harris T.W."/>
            <person name="Hartwieg E."/>
            <person name="Horvitz H.R."/>
            <person name="Jorgensen E.M."/>
        </authorList>
    </citation>
    <scope>NUCLEOTIDE SEQUENCE [MRNA] (ISOFORMS A; B AND C)</scope>
    <scope>FUNCTION</scope>
    <scope>DISRUPTION PHENOTYPE</scope>
</reference>
<reference evidence="13" key="2">
    <citation type="journal article" date="1998" name="Science">
        <title>Genome sequence of the nematode C. elegans: a platform for investigating biology.</title>
        <authorList>
            <consortium name="The C. elegans sequencing consortium"/>
        </authorList>
    </citation>
    <scope>NUCLEOTIDE SEQUENCE [LARGE SCALE GENOMIC DNA]</scope>
    <source>
        <strain evidence="13">Bristol N2</strain>
    </source>
</reference>
<reference evidence="11" key="3">
    <citation type="journal article" date="2003" name="Neuron">
        <title>Endophilin is required for synaptic vesicle endocytosis by localizing synaptojanin.</title>
        <authorList>
            <person name="Schuske K.R."/>
            <person name="Richmond J.E."/>
            <person name="Matthies D.S."/>
            <person name="Davis W.S."/>
            <person name="Runz S."/>
            <person name="Rube D.A."/>
            <person name="van der Bliek A.M."/>
            <person name="Jorgensen E.M."/>
        </authorList>
    </citation>
    <scope>SUBCELLULAR LOCATION</scope>
    <scope>DISRUPTION PHENOTYPE</scope>
</reference>
<reference evidence="11" key="4">
    <citation type="journal article" date="2008" name="Mol. Biol. Cell">
        <title>Polyunsaturated fatty acids influence synaptojanin localization to regulate synaptic vesicle recycling.</title>
        <authorList>
            <person name="Marza E."/>
            <person name="Long T."/>
            <person name="Saiardi A."/>
            <person name="Sumakovic M."/>
            <person name="Eimer S."/>
            <person name="Hall D.H."/>
            <person name="Lesa G.M."/>
        </authorList>
    </citation>
    <scope>FUNCTION</scope>
    <scope>SUBCELLULAR LOCATION</scope>
</reference>
<reference evidence="11" key="5">
    <citation type="journal article" date="2010" name="Cell">
        <title>Endophilin functions as a membrane-bending molecule and is delivered to endocytic zones by exocytosis.</title>
        <authorList>
            <person name="Bai J."/>
            <person name="Hu Z."/>
            <person name="Dittman J.S."/>
            <person name="Pym E.C."/>
            <person name="Kaplan J.M."/>
        </authorList>
    </citation>
    <scope>SUBCELLULAR LOCATION</scope>
    <scope>DOMAIN</scope>
    <scope>DISRUPTION PHENOTYPE</scope>
</reference>
<reference evidence="11" key="6">
    <citation type="journal article" date="2015" name="Elife">
        <title>Synaptojanin cooperates in vivo with endophilin through an unexpected mechanism.</title>
        <authorList>
            <person name="Dong Y."/>
            <person name="Gou Y."/>
            <person name="Li Y."/>
            <person name="Liu Y."/>
            <person name="Bai J."/>
        </authorList>
    </citation>
    <scope>FUNCTION</scope>
    <scope>SUBCELLULAR LOCATION</scope>
    <scope>DOMAIN</scope>
    <scope>MUTAGENESIS OF CYS-378; ASP-380 AND ASP-722</scope>
</reference>
<sequence length="1119" mass="124209">MSVRGIRIWRRNDARFQPSILVEKNGLDGSLLFQGGAIATLDSDSTDVERRSYQKIVDAYGILGVLAITKDEAVLVAVTGVLSVGQLYGADILKITNVEFISLRTFGSVENVDSRIIDLQRLLSSQMFYFSSLQSYDLTRSAQHRDSHDCSDARFFWNRSLHFSFQRYGIDTDNWLLKCMAGSVLVRVVYVGANTGRVALISRLSCERVGTRFNVRGANYLGNVANFVETEQLLLFDEKECSLLQIRGSIPLFWEQPGVNVGSHKVKLRAFETSLPAYHRHLSQLQHRYGEFAIVNLLGRKEGERVLGDAFKTQHKSSHFAPLVDFIDFDYHAQMKISKEAIVQLKKKMSPHMTKHGFFYSMGKEIVKRQTGVIRTNCLDCLDRTNAVQTAIGLQMSHDQVAFLNLNAGKVNVEQRVEEILRDLWQKNGDQCSTIYAGTGALDGKSKLKDASRSLARTIQNNLMDGAKQESFDLFLTGAAYDPRLFDRACNILPPSLIQESYYYHEYADAVSQLVERSPEIAEPQSIKIFVGTWNVNGGKNIHNVAFRNESSLSHWIFANSMTRLVSVEDEQLADIVAIGVEELVDLNASNMVKASTTNQRMWCESIRKTLSEKAPFVLIGSEQLVGVCLFLFARPRVSPYLKDFAVASVKTGMGGATGNKGSVAFRIVVFSTSICFICSHFAAGQNEIRDRNEDFATTLKKIRFPLGREIDSHDVIFWLGDFNYRINLSGDEVKNAVRNGDYAKLVENDQLTQQKALGQTFVGFNEGQLTFAPTYKYDTFSDDYDTSEKCRAPAWTDRILWKDQRKKGKTQLLSYDRSELKTSDHRPVGAVFKVETFKVGGRKCVELIEDVVESMGPPDGTIIVSIAGKPRFPPQMFPPIHEKLKELGAQVQLSKFDDGDLWIVLNSGEMALAALSMDGLKIGGTDQINVKLKSPDWAYALKPHLSDFDLESFEVTAEEEALLGGTDGAVFEFADEDEDAISVSSLTLTGSAPDRPRPPSARSEAISVAKLEWPTEQPNVLSTSMPTRASSASLANSSWYEHVPPLAPPQSNNNKSPPQACLFNPFTQSAPSPAPPPSTIPLPPTRGASVGPGPPAVPVRKAPPPPPRPVIPPRPKNM</sequence>
<keyword id="KW-0025">Alternative splicing</keyword>
<keyword id="KW-0968">Cytoplasmic vesicle</keyword>
<keyword id="KW-0254">Endocytosis</keyword>
<keyword id="KW-0378">Hydrolase</keyword>
<keyword id="KW-1185">Reference proteome</keyword>
<keyword id="KW-0770">Synapse</keyword>
<accession>G5ECL2</accession>
<accession>B3CJ53</accession>
<accession>G5EDR8</accession>
<accession>G5EEJ9</accession>
<comment type="function">
    <text evidence="5 7 9">Probable inositol 5-phosphatase which regulates synaptic vesicle recycling in neurons by regulating clathrin-mediated endocytosis.</text>
</comment>
<comment type="catalytic activity">
    <reaction evidence="1">
        <text>a 1,2-diacyl-sn-glycero-3-phospho-(1D-myo-inositol-4,5-bisphosphate) + H2O = a 1,2-diacyl-sn-glycero-3-phospho-(1D-myo-inositol 4-phosphate) + phosphate</text>
        <dbReference type="Rhea" id="RHEA:22764"/>
        <dbReference type="ChEBI" id="CHEBI:15377"/>
        <dbReference type="ChEBI" id="CHEBI:43474"/>
        <dbReference type="ChEBI" id="CHEBI:58178"/>
        <dbReference type="ChEBI" id="CHEBI:58456"/>
        <dbReference type="EC" id="3.1.3.36"/>
    </reaction>
</comment>
<comment type="subcellular location">
    <subcellularLocation>
        <location evidence="6 8">Cytoplasmic vesicle</location>
        <location evidence="6 8">Secretory vesicle</location>
        <location evidence="6 8">Synaptic vesicle</location>
    </subcellularLocation>
    <subcellularLocation>
        <location evidence="6 7 8 9">Synapse</location>
    </subcellularLocation>
    <text evidence="6 7">Localizes to puncta at neuromuscular junctions in the nerve cord.</text>
</comment>
<comment type="alternative products">
    <event type="alternative splicing"/>
    <isoform>
        <id>G5ECL2-1</id>
        <name evidence="15">b</name>
        <sequence type="displayed"/>
    </isoform>
    <isoform>
        <id>G5ECL2-2</id>
        <name evidence="14">a</name>
        <sequence type="described" ref="VSP_058630"/>
    </isoform>
    <isoform>
        <id>G5ECL2-3</id>
        <name evidence="16">c</name>
        <sequence type="described" ref="VSP_058629 VSP_058631"/>
    </isoform>
    <isoform>
        <id>G5ECL2-4</id>
        <name evidence="17">d</name>
        <sequence type="described" ref="VSP_058632 VSP_058633"/>
    </isoform>
</comment>
<comment type="domain">
    <text evidence="8 9">The Pro-rich domain is dispensable for endocytosis during the synaptic vesicle recycling, locomotion and for endogenous and evoked excitatory postsynaptic currents (EPSC) at neuromuscular junctions (PubMed:21029864, PubMed:25918845). May play a role together with the SAC domain in targeting unc-26 to synapses (PubMed:25918845).</text>
</comment>
<comment type="domain">
    <text evidence="9">The SAC domain, but not is catalytic activity, is required for targeting unc-26 to synapses, for locomotion and for normal endogenous and evoked excitatory postsynaptic currents (EPSC) at neuromuscular junctions.</text>
</comment>
<comment type="disruption phenotype">
    <text evidence="5 6 8">Viable but small with slow grow and uncoordinated movements (PubMed:10931870, PubMed:21029864). Synaptic vesicles at neuromuscular synapses are reduced, arranged linearly and are dissociated from the synaptic active zone (PubMed:10931870). Several defects in vesicle recycling including accumulation of endocytic pits at the neuromuscular junctions and accumulation of coated vesicles predominantly at synapses of neurons but also near the Golgi in cell bodies of neurons, muscles, hypodermis and gonadal sheath cells (PubMed:10931870). Accumulation of endosome-like compartments in cholinergic and GABA neurons and diffused snb-1/synaptobrevin distribution along the ventral nerve cord (PubMed:10931870). Neurotransmission defects characterized by reduced endogenous frequency of synaptic vesicle fusion, a reduced evoked current amplitude after one stimulation and a faster decline in evoked response caused by multiple responses (PubMed:14622579). Resistant to paralysis induced by Aldicar, an acetylcholinesterase inhibitor which causes acetylcholine accumulation (PubMed:14622579).</text>
</comment>
<comment type="similarity">
    <text evidence="11">Belongs to the synaptojanin family.</text>
</comment>
<comment type="similarity">
    <text evidence="11">In the central section; belongs to the inositol 1,4,5-trisphosphate 5-phosphatase family.</text>
</comment>
<feature type="chain" id="PRO_0000438241" description="Synaptojanin" evidence="11">
    <location>
        <begin position="1"/>
        <end position="1119"/>
    </location>
</feature>
<feature type="domain" description="SAC" evidence="3">
    <location>
        <begin position="119"/>
        <end position="438"/>
    </location>
</feature>
<feature type="region of interest" description="Catalytic" evidence="2">
    <location>
        <begin position="532"/>
        <end position="826"/>
    </location>
</feature>
<feature type="region of interest" description="Disordered" evidence="4">
    <location>
        <begin position="986"/>
        <end position="1005"/>
    </location>
</feature>
<feature type="region of interest" description="Disordered" evidence="4">
    <location>
        <begin position="1042"/>
        <end position="1119"/>
    </location>
</feature>
<feature type="compositionally biased region" description="Low complexity" evidence="4">
    <location>
        <begin position="1050"/>
        <end position="1072"/>
    </location>
</feature>
<feature type="compositionally biased region" description="Pro residues" evidence="4">
    <location>
        <begin position="1073"/>
        <end position="1085"/>
    </location>
</feature>
<feature type="compositionally biased region" description="Pro residues" evidence="4">
    <location>
        <begin position="1093"/>
        <end position="1119"/>
    </location>
</feature>
<feature type="splice variant" id="VSP_058629" description="In isoform c." evidence="11">
    <original>ESY</original>
    <variation>GLF</variation>
    <location>
        <begin position="500"/>
        <end position="502"/>
    </location>
</feature>
<feature type="splice variant" id="VSP_058630" description="In isoform a." evidence="11">
    <location>
        <begin position="501"/>
        <end position="506"/>
    </location>
</feature>
<feature type="splice variant" id="VSP_058631" description="In isoform c." evidence="11">
    <location>
        <begin position="503"/>
        <end position="1119"/>
    </location>
</feature>
<feature type="splice variant" id="VSP_058632" description="In isoform d." evidence="11">
    <original>EYA</original>
    <variation>GKL</variation>
    <location>
        <begin position="506"/>
        <end position="508"/>
    </location>
</feature>
<feature type="splice variant" id="VSP_058633" description="In isoform d." evidence="11">
    <location>
        <begin position="509"/>
        <end position="1119"/>
    </location>
</feature>
<feature type="mutagenesis site" description="Normal synapse localization, locomotion and, endogenous and evoked excitatory postsynaptic currents; when associated with N-380." evidence="9">
    <original>C</original>
    <variation>S</variation>
    <location>
        <position position="378"/>
    </location>
</feature>
<feature type="mutagenesis site" description="Normal synapse localization, locomotion and, endogenous and evoked excitatory postsynaptic currents; when associated with S-378." evidence="9">
    <original>D</original>
    <variation>N</variation>
    <location>
        <position position="380"/>
    </location>
</feature>
<feature type="mutagenesis site" description="Probable loss of catalytic activity. Reduced locomotion and severe reduction in endogenous and evoked excitatory postsynaptic currents." evidence="9">
    <original>D</original>
    <variation>A</variation>
    <location>
        <position position="722"/>
    </location>
</feature>
<organism evidence="12">
    <name type="scientific">Caenorhabditis elegans</name>
    <dbReference type="NCBI Taxonomy" id="6239"/>
    <lineage>
        <taxon>Eukaryota</taxon>
        <taxon>Metazoa</taxon>
        <taxon>Ecdysozoa</taxon>
        <taxon>Nematoda</taxon>
        <taxon>Chromadorea</taxon>
        <taxon>Rhabditida</taxon>
        <taxon>Rhabditina</taxon>
        <taxon>Rhabditomorpha</taxon>
        <taxon>Rhabditoidea</taxon>
        <taxon>Rhabditidae</taxon>
        <taxon>Peloderinae</taxon>
        <taxon>Caenorhabditis</taxon>
    </lineage>
</organism>
<gene>
    <name evidence="15" type="primary">unc-26</name>
    <name evidence="15" type="ORF">JC8.10</name>
</gene>
<evidence type="ECO:0000250" key="1">
    <source>
        <dbReference type="UniProtKB" id="Q9D2G5"/>
    </source>
</evidence>
<evidence type="ECO:0000255" key="2"/>
<evidence type="ECO:0000255" key="3">
    <source>
        <dbReference type="PROSITE-ProRule" id="PRU00183"/>
    </source>
</evidence>
<evidence type="ECO:0000256" key="4">
    <source>
        <dbReference type="SAM" id="MobiDB-lite"/>
    </source>
</evidence>
<evidence type="ECO:0000269" key="5">
    <source>
    </source>
</evidence>
<evidence type="ECO:0000269" key="6">
    <source>
    </source>
</evidence>
<evidence type="ECO:0000269" key="7">
    <source>
    </source>
</evidence>
<evidence type="ECO:0000269" key="8">
    <source>
    </source>
</evidence>
<evidence type="ECO:0000269" key="9">
    <source>
    </source>
</evidence>
<evidence type="ECO:0000303" key="10">
    <source>
    </source>
</evidence>
<evidence type="ECO:0000305" key="11"/>
<evidence type="ECO:0000312" key="12">
    <source>
        <dbReference type="EMBL" id="AAG18574.1"/>
    </source>
</evidence>
<evidence type="ECO:0000312" key="13">
    <source>
        <dbReference type="Proteomes" id="UP000001940"/>
    </source>
</evidence>
<evidence type="ECO:0000312" key="14">
    <source>
        <dbReference type="WormBase" id="JC8.10a"/>
    </source>
</evidence>
<evidence type="ECO:0000312" key="15">
    <source>
        <dbReference type="WormBase" id="JC8.10b"/>
    </source>
</evidence>
<evidence type="ECO:0000312" key="16">
    <source>
        <dbReference type="WormBase" id="JC8.10c"/>
    </source>
</evidence>
<evidence type="ECO:0000312" key="17">
    <source>
        <dbReference type="WormBase" id="JC8.10d"/>
    </source>
</evidence>
<dbReference type="EC" id="3.1.3.36" evidence="1"/>
<dbReference type="EMBL" id="AF283322">
    <property type="protein sequence ID" value="AAG18574.1"/>
    <property type="molecule type" value="mRNA"/>
</dbReference>
<dbReference type="EMBL" id="AF283323">
    <property type="protein sequence ID" value="AAG18575.1"/>
    <property type="molecule type" value="mRNA"/>
</dbReference>
<dbReference type="EMBL" id="AF283324">
    <property type="protein sequence ID" value="AAG18576.1"/>
    <property type="molecule type" value="mRNA"/>
</dbReference>
<dbReference type="EMBL" id="BX284604">
    <property type="protein sequence ID" value="CAB05234.2"/>
    <property type="molecule type" value="Genomic_DNA"/>
</dbReference>
<dbReference type="EMBL" id="BX284604">
    <property type="protein sequence ID" value="CAC70096.1"/>
    <property type="molecule type" value="Genomic_DNA"/>
</dbReference>
<dbReference type="EMBL" id="BX284604">
    <property type="protein sequence ID" value="CAQ58127.1"/>
    <property type="molecule type" value="Genomic_DNA"/>
</dbReference>
<dbReference type="EMBL" id="BX284604">
    <property type="protein sequence ID" value="CAN86614.1"/>
    <property type="molecule type" value="Genomic_DNA"/>
</dbReference>
<dbReference type="PIR" id="C88883">
    <property type="entry name" value="C88883"/>
</dbReference>
<dbReference type="RefSeq" id="NP_001023265.1">
    <molecule id="G5ECL2-2"/>
    <property type="nucleotide sequence ID" value="NM_001028094.5"/>
</dbReference>
<dbReference type="RefSeq" id="NP_001023266.1">
    <molecule id="G5ECL2-1"/>
    <property type="nucleotide sequence ID" value="NM_001028095.6"/>
</dbReference>
<dbReference type="RefSeq" id="NP_001122785.1">
    <molecule id="G5ECL2-3"/>
    <property type="nucleotide sequence ID" value="NM_001129313.3"/>
</dbReference>
<dbReference type="RefSeq" id="NP_001129862.1">
    <molecule id="G5ECL2-4"/>
    <property type="nucleotide sequence ID" value="NM_001136390.4"/>
</dbReference>
<dbReference type="SMR" id="G5ECL2"/>
<dbReference type="FunCoup" id="G5ECL2">
    <property type="interactions" value="2066"/>
</dbReference>
<dbReference type="IntAct" id="G5ECL2">
    <property type="interactions" value="11"/>
</dbReference>
<dbReference type="STRING" id="6239.JC8.10b.1"/>
<dbReference type="PaxDb" id="6239-JC8.10b"/>
<dbReference type="PeptideAtlas" id="G5ECL2"/>
<dbReference type="EnsemblMetazoa" id="JC8.10a.1">
    <molecule id="G5ECL2-2"/>
    <property type="protein sequence ID" value="JC8.10a.1"/>
    <property type="gene ID" value="WBGene00006763"/>
</dbReference>
<dbReference type="EnsemblMetazoa" id="JC8.10b.1">
    <molecule id="G5ECL2-1"/>
    <property type="protein sequence ID" value="JC8.10b.1"/>
    <property type="gene ID" value="WBGene00006763"/>
</dbReference>
<dbReference type="EnsemblMetazoa" id="JC8.10c.1">
    <molecule id="G5ECL2-3"/>
    <property type="protein sequence ID" value="JC8.10c.1"/>
    <property type="gene ID" value="WBGene00006763"/>
</dbReference>
<dbReference type="EnsemblMetazoa" id="JC8.10d.1">
    <molecule id="G5ECL2-4"/>
    <property type="protein sequence ID" value="JC8.10d.1"/>
    <property type="gene ID" value="WBGene00006763"/>
</dbReference>
<dbReference type="GeneID" id="178284"/>
<dbReference type="KEGG" id="cel:CELE_JC8.10"/>
<dbReference type="AGR" id="WB:WBGene00006763"/>
<dbReference type="CTD" id="178284"/>
<dbReference type="WormBase" id="JC8.10a">
    <molecule id="G5ECL2-2"/>
    <property type="protein sequence ID" value="CE28239"/>
    <property type="gene ID" value="WBGene00006763"/>
    <property type="gene designation" value="unc-26"/>
</dbReference>
<dbReference type="WormBase" id="JC8.10b">
    <molecule id="G5ECL2-1"/>
    <property type="protein sequence ID" value="CE29050"/>
    <property type="gene ID" value="WBGene00006763"/>
    <property type="gene designation" value="unc-26"/>
</dbReference>
<dbReference type="WormBase" id="JC8.10c">
    <molecule id="G5ECL2-3"/>
    <property type="protein sequence ID" value="CE40972"/>
    <property type="gene ID" value="WBGene00006763"/>
    <property type="gene designation" value="unc-26"/>
</dbReference>
<dbReference type="WormBase" id="JC8.10d">
    <molecule id="G5ECL2-4"/>
    <property type="protein sequence ID" value="CE42707"/>
    <property type="gene ID" value="WBGene00006763"/>
    <property type="gene designation" value="unc-26"/>
</dbReference>
<dbReference type="eggNOG" id="KOG0566">
    <property type="taxonomic scope" value="Eukaryota"/>
</dbReference>
<dbReference type="GeneTree" id="ENSGT00940000170400"/>
<dbReference type="InParanoid" id="G5ECL2"/>
<dbReference type="OMA" id="HPCHELR"/>
<dbReference type="OrthoDB" id="1925875at2759"/>
<dbReference type="PhylomeDB" id="G5ECL2"/>
<dbReference type="Reactome" id="R-CEL-1660499">
    <property type="pathway name" value="Synthesis of PIPs at the plasma membrane"/>
</dbReference>
<dbReference type="Reactome" id="R-CEL-1855183">
    <property type="pathway name" value="Synthesis of IP2, IP, and Ins in the cytosol"/>
</dbReference>
<dbReference type="Reactome" id="R-CEL-1855204">
    <property type="pathway name" value="Synthesis of IP3 and IP4 in the cytosol"/>
</dbReference>
<dbReference type="Reactome" id="R-CEL-8856828">
    <property type="pathway name" value="Clathrin-mediated endocytosis"/>
</dbReference>
<dbReference type="SignaLink" id="G5ECL2"/>
<dbReference type="PRO" id="PR:G5ECL2"/>
<dbReference type="Proteomes" id="UP000001940">
    <property type="component" value="Chromosome IV"/>
</dbReference>
<dbReference type="Bgee" id="WBGene00006763">
    <property type="expression patterns" value="Expressed in germ line (C elegans) and 4 other cell types or tissues"/>
</dbReference>
<dbReference type="GO" id="GO:0005737">
    <property type="term" value="C:cytoplasm"/>
    <property type="evidence" value="ECO:0000318"/>
    <property type="project" value="GO_Central"/>
</dbReference>
<dbReference type="GO" id="GO:0016020">
    <property type="term" value="C:membrane"/>
    <property type="evidence" value="ECO:0000318"/>
    <property type="project" value="GO_Central"/>
</dbReference>
<dbReference type="GO" id="GO:0045202">
    <property type="term" value="C:synapse"/>
    <property type="evidence" value="ECO:0000314"/>
    <property type="project" value="WormBase"/>
</dbReference>
<dbReference type="GO" id="GO:0008021">
    <property type="term" value="C:synaptic vesicle"/>
    <property type="evidence" value="ECO:0000250"/>
    <property type="project" value="WormBase"/>
</dbReference>
<dbReference type="GO" id="GO:0052658">
    <property type="term" value="F:inositol-1,4,5-trisphosphate 5-phosphatase activity"/>
    <property type="evidence" value="ECO:0000318"/>
    <property type="project" value="GO_Central"/>
</dbReference>
<dbReference type="GO" id="GO:0043813">
    <property type="term" value="F:phosphatidylinositol-3,5-bisphosphate 5-phosphatase activity"/>
    <property type="evidence" value="ECO:0000250"/>
    <property type="project" value="WormBase"/>
</dbReference>
<dbReference type="GO" id="GO:0004439">
    <property type="term" value="F:phosphatidylinositol-4,5-bisphosphate 5-phosphatase activity"/>
    <property type="evidence" value="ECO:0000318"/>
    <property type="project" value="GO_Central"/>
</dbReference>
<dbReference type="GO" id="GO:0015870">
    <property type="term" value="P:acetylcholine transport"/>
    <property type="evidence" value="ECO:0000315"/>
    <property type="project" value="WormBase"/>
</dbReference>
<dbReference type="GO" id="GO:0007010">
    <property type="term" value="P:cytoskeleton organization"/>
    <property type="evidence" value="ECO:0000315"/>
    <property type="project" value="WormBase"/>
</dbReference>
<dbReference type="GO" id="GO:0007032">
    <property type="term" value="P:endosome organization"/>
    <property type="evidence" value="ECO:0000315"/>
    <property type="project" value="WormBase"/>
</dbReference>
<dbReference type="GO" id="GO:0015812">
    <property type="term" value="P:gamma-aminobutyric acid transport"/>
    <property type="evidence" value="ECO:0000315"/>
    <property type="project" value="WormBase"/>
</dbReference>
<dbReference type="GO" id="GO:0048212">
    <property type="term" value="P:Golgi vesicle uncoating"/>
    <property type="evidence" value="ECO:0000315"/>
    <property type="project" value="WormBase"/>
</dbReference>
<dbReference type="GO" id="GO:0040011">
    <property type="term" value="P:locomotion"/>
    <property type="evidence" value="ECO:0000315"/>
    <property type="project" value="WormBase"/>
</dbReference>
<dbReference type="GO" id="GO:0006936">
    <property type="term" value="P:muscle contraction"/>
    <property type="evidence" value="ECO:0000315"/>
    <property type="project" value="WormBase"/>
</dbReference>
<dbReference type="GO" id="GO:0070266">
    <property type="term" value="P:necroptotic process"/>
    <property type="evidence" value="ECO:0000316"/>
    <property type="project" value="WormBase"/>
</dbReference>
<dbReference type="GO" id="GO:0046856">
    <property type="term" value="P:phosphatidylinositol dephosphorylation"/>
    <property type="evidence" value="ECO:0007669"/>
    <property type="project" value="InterPro"/>
</dbReference>
<dbReference type="GO" id="GO:0040018">
    <property type="term" value="P:positive regulation of multicellular organism growth"/>
    <property type="evidence" value="ECO:0000315"/>
    <property type="project" value="WormBase"/>
</dbReference>
<dbReference type="GO" id="GO:0045933">
    <property type="term" value="P:positive regulation of muscle contraction"/>
    <property type="evidence" value="ECO:0000315"/>
    <property type="project" value="WormBase"/>
</dbReference>
<dbReference type="GO" id="GO:0001956">
    <property type="term" value="P:positive regulation of neurotransmitter secretion"/>
    <property type="evidence" value="ECO:0000315"/>
    <property type="project" value="WormBase"/>
</dbReference>
<dbReference type="GO" id="GO:0035418">
    <property type="term" value="P:protein localization to synapse"/>
    <property type="evidence" value="ECO:0000316"/>
    <property type="project" value="WormBase"/>
</dbReference>
<dbReference type="GO" id="GO:0043058">
    <property type="term" value="P:regulation of backward locomotion"/>
    <property type="evidence" value="ECO:0000315"/>
    <property type="project" value="WormBase"/>
</dbReference>
<dbReference type="GO" id="GO:0043059">
    <property type="term" value="P:regulation of forward locomotion"/>
    <property type="evidence" value="ECO:0000315"/>
    <property type="project" value="WormBase"/>
</dbReference>
<dbReference type="GO" id="GO:0016185">
    <property type="term" value="P:synaptic vesicle budding from presynaptic endocytic zone membrane"/>
    <property type="evidence" value="ECO:0000315"/>
    <property type="project" value="WormBase"/>
</dbReference>
<dbReference type="GO" id="GO:0048488">
    <property type="term" value="P:synaptic vesicle endocytosis"/>
    <property type="evidence" value="ECO:0000315"/>
    <property type="project" value="WormBase"/>
</dbReference>
<dbReference type="GO" id="GO:0048489">
    <property type="term" value="P:synaptic vesicle transport"/>
    <property type="evidence" value="ECO:0000315"/>
    <property type="project" value="WormBase"/>
</dbReference>
<dbReference type="GO" id="GO:0016191">
    <property type="term" value="P:synaptic vesicle uncoating"/>
    <property type="evidence" value="ECO:0000315"/>
    <property type="project" value="WormBase"/>
</dbReference>
<dbReference type="GO" id="GO:0016050">
    <property type="term" value="P:vesicle organization"/>
    <property type="evidence" value="ECO:0000315"/>
    <property type="project" value="WormBase"/>
</dbReference>
<dbReference type="CDD" id="cd09089">
    <property type="entry name" value="INPP5c_Synj"/>
    <property type="match status" value="1"/>
</dbReference>
<dbReference type="FunFam" id="3.60.10.10:FF:000113">
    <property type="entry name" value="CRE-UNC-26 protein"/>
    <property type="match status" value="1"/>
</dbReference>
<dbReference type="Gene3D" id="3.30.70.330">
    <property type="match status" value="1"/>
</dbReference>
<dbReference type="Gene3D" id="3.60.10.10">
    <property type="entry name" value="Endonuclease/exonuclease/phosphatase"/>
    <property type="match status" value="1"/>
</dbReference>
<dbReference type="InterPro" id="IPR036691">
    <property type="entry name" value="Endo/exonu/phosph_ase_sf"/>
</dbReference>
<dbReference type="InterPro" id="IPR046985">
    <property type="entry name" value="IP5"/>
</dbReference>
<dbReference type="InterPro" id="IPR000300">
    <property type="entry name" value="IPPc"/>
</dbReference>
<dbReference type="InterPro" id="IPR012677">
    <property type="entry name" value="Nucleotide-bd_a/b_plait_sf"/>
</dbReference>
<dbReference type="InterPro" id="IPR002013">
    <property type="entry name" value="SAC_dom"/>
</dbReference>
<dbReference type="InterPro" id="IPR015047">
    <property type="entry name" value="SYNJ1/2_RRM"/>
</dbReference>
<dbReference type="PANTHER" id="PTHR11200">
    <property type="entry name" value="INOSITOL 5-PHOSPHATASE"/>
    <property type="match status" value="1"/>
</dbReference>
<dbReference type="PANTHER" id="PTHR11200:SF257">
    <property type="entry name" value="PHOSPHOINOSITIDE 5-PHOSPHATASE"/>
    <property type="match status" value="1"/>
</dbReference>
<dbReference type="Pfam" id="PF08952">
    <property type="entry name" value="DUF1866"/>
    <property type="match status" value="1"/>
</dbReference>
<dbReference type="Pfam" id="PF22669">
    <property type="entry name" value="Exo_endo_phos2"/>
    <property type="match status" value="1"/>
</dbReference>
<dbReference type="Pfam" id="PF02383">
    <property type="entry name" value="Syja_N"/>
    <property type="match status" value="1"/>
</dbReference>
<dbReference type="SMART" id="SM01165">
    <property type="entry name" value="DUF1866"/>
    <property type="match status" value="1"/>
</dbReference>
<dbReference type="SMART" id="SM00128">
    <property type="entry name" value="IPPc"/>
    <property type="match status" value="1"/>
</dbReference>
<dbReference type="SUPFAM" id="SSF56219">
    <property type="entry name" value="DNase I-like"/>
    <property type="match status" value="1"/>
</dbReference>
<dbReference type="PROSITE" id="PS50275">
    <property type="entry name" value="SAC"/>
    <property type="match status" value="1"/>
</dbReference>